<organism>
    <name type="scientific">Plasmodium vivax (strain Salvador I)</name>
    <dbReference type="NCBI Taxonomy" id="126793"/>
    <lineage>
        <taxon>Eukaryota</taxon>
        <taxon>Sar</taxon>
        <taxon>Alveolata</taxon>
        <taxon>Apicomplexa</taxon>
        <taxon>Aconoidasida</taxon>
        <taxon>Haemosporida</taxon>
        <taxon>Plasmodiidae</taxon>
        <taxon>Plasmodium</taxon>
        <taxon>Plasmodium (Plasmodium)</taxon>
    </lineage>
</organism>
<protein>
    <recommendedName>
        <fullName evidence="1">U1 small nuclear ribonucleoprotein C</fullName>
        <shortName evidence="1">U1 snRNP C</shortName>
        <shortName evidence="1">U1-C</shortName>
        <shortName evidence="1">U1C</shortName>
    </recommendedName>
</protein>
<name>RU1C_PLAVS</name>
<comment type="function">
    <text evidence="1">Component of the spliceosomal U1 snRNP, which is essential for recognition of the pre-mRNA 5' splice-site and the subsequent assembly of the spliceosome. U1-C is directly involved in initial 5' splice-site recognition for both constitutive and regulated alternative splicing. The interaction with the 5' splice-site seems to precede base-pairing between the pre-mRNA and the U1 snRNA. Stimulates commitment or early (E) complex formation by stabilizing the base pairing of the 5' end of the U1 snRNA and the 5' splice-site region.</text>
</comment>
<comment type="subunit">
    <text evidence="1">U1 snRNP is composed of the 7 core Sm proteins B/B', D1, D2, D3, E, F and G that assemble in a heptameric protein ring on the Sm site of the small nuclear RNA to form the core snRNP, and at least 3 U1 snRNP-specific proteins U1-70K, U1-A and U1-C. U1-C interacts with U1 snRNA and the 5' splice-site region of the pre-mRNA.</text>
</comment>
<comment type="subcellular location">
    <subcellularLocation>
        <location evidence="1">Nucleus</location>
    </subcellularLocation>
</comment>
<comment type="similarity">
    <text evidence="1">Belongs to the U1 small nuclear ribonucleoprotein C family.</text>
</comment>
<gene>
    <name type="ORF">PVX_123135</name>
</gene>
<sequence length="240" mass="26851">MPKYYCEYCDIYLTHSSPVGRRQHIQGRKHISAKIEYFQNLLREEGITPQNFLGFLGNRAFNNMLGNPMMNNMMPGNFPMHMKHGGMKHHSHYSRHSHRHHMSHGRYNRERHGHHSYSSKYHSHPMHMNSNSIGNPSGFSNGKYSGSFFSSPNAMHGNGKMFNNTIRDLVSNVNIDSDPVKDSQNGERVGDNAIDKVSSGMHDQGDRGDLGDHADHADHAGPVSATDGTANGNDQVSVDA</sequence>
<proteinExistence type="inferred from homology"/>
<dbReference type="EMBL" id="AAKM01000001">
    <property type="protein sequence ID" value="EDL47463.1"/>
    <property type="molecule type" value="Genomic_DNA"/>
</dbReference>
<dbReference type="RefSeq" id="XP_001617190.1">
    <property type="nucleotide sequence ID" value="XM_001617140.1"/>
</dbReference>
<dbReference type="SMR" id="A5JZQ2"/>
<dbReference type="FunCoup" id="A5JZQ2">
    <property type="interactions" value="84"/>
</dbReference>
<dbReference type="STRING" id="126793.A5JZQ2"/>
<dbReference type="EnsemblProtists" id="EDL47463">
    <property type="protein sequence ID" value="EDL47463"/>
    <property type="gene ID" value="PVX_123135"/>
</dbReference>
<dbReference type="GeneID" id="5476499"/>
<dbReference type="KEGG" id="pvx:PVX_123135"/>
<dbReference type="VEuPathDB" id="PlasmoDB:PVX_123135"/>
<dbReference type="InParanoid" id="A5JZQ2"/>
<dbReference type="OMA" id="MHGNGKM"/>
<dbReference type="PhylomeDB" id="A5JZQ2"/>
<dbReference type="Proteomes" id="UP000008333">
    <property type="component" value="Chromosome 14"/>
</dbReference>
<dbReference type="GO" id="GO:0000243">
    <property type="term" value="C:commitment complex"/>
    <property type="evidence" value="ECO:0007669"/>
    <property type="project" value="UniProtKB-UniRule"/>
</dbReference>
<dbReference type="GO" id="GO:0005685">
    <property type="term" value="C:U1 snRNP"/>
    <property type="evidence" value="ECO:0007669"/>
    <property type="project" value="UniProtKB-UniRule"/>
</dbReference>
<dbReference type="GO" id="GO:0071004">
    <property type="term" value="C:U2-type prespliceosome"/>
    <property type="evidence" value="ECO:0007669"/>
    <property type="project" value="UniProtKB-UniRule"/>
</dbReference>
<dbReference type="GO" id="GO:0003729">
    <property type="term" value="F:mRNA binding"/>
    <property type="evidence" value="ECO:0007669"/>
    <property type="project" value="UniProtKB-UniRule"/>
</dbReference>
<dbReference type="GO" id="GO:0030627">
    <property type="term" value="F:pre-mRNA 5'-splice site binding"/>
    <property type="evidence" value="ECO:0007669"/>
    <property type="project" value="InterPro"/>
</dbReference>
<dbReference type="GO" id="GO:0030619">
    <property type="term" value="F:U1 snRNA binding"/>
    <property type="evidence" value="ECO:0007669"/>
    <property type="project" value="UniProtKB-UniRule"/>
</dbReference>
<dbReference type="GO" id="GO:0008270">
    <property type="term" value="F:zinc ion binding"/>
    <property type="evidence" value="ECO:0007669"/>
    <property type="project" value="UniProtKB-UniRule"/>
</dbReference>
<dbReference type="GO" id="GO:0000395">
    <property type="term" value="P:mRNA 5'-splice site recognition"/>
    <property type="evidence" value="ECO:0007669"/>
    <property type="project" value="UniProtKB-UniRule"/>
</dbReference>
<dbReference type="GO" id="GO:0000387">
    <property type="term" value="P:spliceosomal snRNP assembly"/>
    <property type="evidence" value="ECO:0007669"/>
    <property type="project" value="UniProtKB-UniRule"/>
</dbReference>
<dbReference type="FunFam" id="3.30.160.60:FF:000890">
    <property type="entry name" value="U1 small nuclear ribonucleoprotein C"/>
    <property type="match status" value="1"/>
</dbReference>
<dbReference type="Gene3D" id="3.30.160.60">
    <property type="entry name" value="Classic Zinc Finger"/>
    <property type="match status" value="1"/>
</dbReference>
<dbReference type="HAMAP" id="MF_03153">
    <property type="entry name" value="U1_C"/>
    <property type="match status" value="1"/>
</dbReference>
<dbReference type="InterPro" id="IPR000690">
    <property type="entry name" value="Matrin/U1-C_Znf_C2H2"/>
</dbReference>
<dbReference type="InterPro" id="IPR003604">
    <property type="entry name" value="Matrin/U1-like-C_Znf_C2H2"/>
</dbReference>
<dbReference type="InterPro" id="IPR013085">
    <property type="entry name" value="U1-CZ_Znf_C2H2"/>
</dbReference>
<dbReference type="InterPro" id="IPR017340">
    <property type="entry name" value="U1_snRNP-C"/>
</dbReference>
<dbReference type="InterPro" id="IPR036236">
    <property type="entry name" value="Znf_C2H2_sf"/>
</dbReference>
<dbReference type="PANTHER" id="PTHR31148">
    <property type="entry name" value="U1 SMALL NUCLEAR RIBONUCLEOPROTEIN C"/>
    <property type="match status" value="1"/>
</dbReference>
<dbReference type="PANTHER" id="PTHR31148:SF1">
    <property type="entry name" value="U1 SMALL NUCLEAR RIBONUCLEOPROTEIN C"/>
    <property type="match status" value="1"/>
</dbReference>
<dbReference type="Pfam" id="PF06220">
    <property type="entry name" value="zf-U1"/>
    <property type="match status" value="1"/>
</dbReference>
<dbReference type="SMART" id="SM00451">
    <property type="entry name" value="ZnF_U1"/>
    <property type="match status" value="1"/>
</dbReference>
<dbReference type="SUPFAM" id="SSF57667">
    <property type="entry name" value="beta-beta-alpha zinc fingers"/>
    <property type="match status" value="1"/>
</dbReference>
<dbReference type="PROSITE" id="PS50171">
    <property type="entry name" value="ZF_MATRIN"/>
    <property type="match status" value="1"/>
</dbReference>
<reference key="1">
    <citation type="journal article" date="2008" name="Nature">
        <title>Comparative genomics of the neglected human malaria parasite Plasmodium vivax.</title>
        <authorList>
            <person name="Carlton J.M."/>
            <person name="Adams J.H."/>
            <person name="Silva J.C."/>
            <person name="Bidwell S.L."/>
            <person name="Lorenzi H."/>
            <person name="Caler E."/>
            <person name="Crabtree J."/>
            <person name="Angiuoli S.V."/>
            <person name="Merino E.F."/>
            <person name="Amedeo P."/>
            <person name="Cheng Q."/>
            <person name="Coulson R.M.R."/>
            <person name="Crabb B.S."/>
            <person name="del Portillo H.A."/>
            <person name="Essien K."/>
            <person name="Feldblyum T.V."/>
            <person name="Fernandez-Becerra C."/>
            <person name="Gilson P.R."/>
            <person name="Gueye A.H."/>
            <person name="Guo X."/>
            <person name="Kang'a S."/>
            <person name="Kooij T.W.A."/>
            <person name="Korsinczky M."/>
            <person name="Meyer E.V.-S."/>
            <person name="Nene V."/>
            <person name="Paulsen I."/>
            <person name="White O."/>
            <person name="Ralph S.A."/>
            <person name="Ren Q."/>
            <person name="Sargeant T.J."/>
            <person name="Salzberg S.L."/>
            <person name="Stoeckert C.J."/>
            <person name="Sullivan S.A."/>
            <person name="Yamamoto M.M."/>
            <person name="Hoffman S.L."/>
            <person name="Wortman J.R."/>
            <person name="Gardner M.J."/>
            <person name="Galinski M.R."/>
            <person name="Barnwell J.W."/>
            <person name="Fraser-Liggett C.M."/>
        </authorList>
    </citation>
    <scope>NUCLEOTIDE SEQUENCE [LARGE SCALE GENOMIC DNA]</scope>
    <source>
        <strain>Salvador I</strain>
    </source>
</reference>
<accession>A5JZQ2</accession>
<evidence type="ECO:0000255" key="1">
    <source>
        <dbReference type="HAMAP-Rule" id="MF_03153"/>
    </source>
</evidence>
<evidence type="ECO:0000256" key="2">
    <source>
        <dbReference type="SAM" id="MobiDB-lite"/>
    </source>
</evidence>
<keyword id="KW-0479">Metal-binding</keyword>
<keyword id="KW-0539">Nucleus</keyword>
<keyword id="KW-1185">Reference proteome</keyword>
<keyword id="KW-0687">Ribonucleoprotein</keyword>
<keyword id="KW-0694">RNA-binding</keyword>
<keyword id="KW-0862">Zinc</keyword>
<keyword id="KW-0863">Zinc-finger</keyword>
<feature type="chain" id="PRO_0000414277" description="U1 small nuclear ribonucleoprotein C">
    <location>
        <begin position="1"/>
        <end position="240"/>
    </location>
</feature>
<feature type="zinc finger region" description="Matrin-type" evidence="1">
    <location>
        <begin position="4"/>
        <end position="36"/>
    </location>
</feature>
<feature type="region of interest" description="Disordered" evidence="2">
    <location>
        <begin position="86"/>
        <end position="122"/>
    </location>
</feature>
<feature type="region of interest" description="Disordered" evidence="2">
    <location>
        <begin position="175"/>
        <end position="240"/>
    </location>
</feature>
<feature type="compositionally biased region" description="Basic and acidic residues" evidence="2">
    <location>
        <begin position="178"/>
        <end position="194"/>
    </location>
</feature>
<feature type="compositionally biased region" description="Basic and acidic residues" evidence="2">
    <location>
        <begin position="203"/>
        <end position="219"/>
    </location>
</feature>
<feature type="compositionally biased region" description="Polar residues" evidence="2">
    <location>
        <begin position="226"/>
        <end position="240"/>
    </location>
</feature>